<reference key="1">
    <citation type="journal article" date="2013" name="Nature">
        <title>The zebrafish reference genome sequence and its relationship to the human genome.</title>
        <authorList>
            <person name="Howe K."/>
            <person name="Clark M.D."/>
            <person name="Torroja C.F."/>
            <person name="Torrance J."/>
            <person name="Berthelot C."/>
            <person name="Muffato M."/>
            <person name="Collins J.E."/>
            <person name="Humphray S."/>
            <person name="McLaren K."/>
            <person name="Matthews L."/>
            <person name="McLaren S."/>
            <person name="Sealy I."/>
            <person name="Caccamo M."/>
            <person name="Churcher C."/>
            <person name="Scott C."/>
            <person name="Barrett J.C."/>
            <person name="Koch R."/>
            <person name="Rauch G.J."/>
            <person name="White S."/>
            <person name="Chow W."/>
            <person name="Kilian B."/>
            <person name="Quintais L.T."/>
            <person name="Guerra-Assuncao J.A."/>
            <person name="Zhou Y."/>
            <person name="Gu Y."/>
            <person name="Yen J."/>
            <person name="Vogel J.H."/>
            <person name="Eyre T."/>
            <person name="Redmond S."/>
            <person name="Banerjee R."/>
            <person name="Chi J."/>
            <person name="Fu B."/>
            <person name="Langley E."/>
            <person name="Maguire S.F."/>
            <person name="Laird G.K."/>
            <person name="Lloyd D."/>
            <person name="Kenyon E."/>
            <person name="Donaldson S."/>
            <person name="Sehra H."/>
            <person name="Almeida-King J."/>
            <person name="Loveland J."/>
            <person name="Trevanion S."/>
            <person name="Jones M."/>
            <person name="Quail M."/>
            <person name="Willey D."/>
            <person name="Hunt A."/>
            <person name="Burton J."/>
            <person name="Sims S."/>
            <person name="McLay K."/>
            <person name="Plumb B."/>
            <person name="Davis J."/>
            <person name="Clee C."/>
            <person name="Oliver K."/>
            <person name="Clark R."/>
            <person name="Riddle C."/>
            <person name="Elliot D."/>
            <person name="Threadgold G."/>
            <person name="Harden G."/>
            <person name="Ware D."/>
            <person name="Begum S."/>
            <person name="Mortimore B."/>
            <person name="Kerry G."/>
            <person name="Heath P."/>
            <person name="Phillimore B."/>
            <person name="Tracey A."/>
            <person name="Corby N."/>
            <person name="Dunn M."/>
            <person name="Johnson C."/>
            <person name="Wood J."/>
            <person name="Clark S."/>
            <person name="Pelan S."/>
            <person name="Griffiths G."/>
            <person name="Smith M."/>
            <person name="Glithero R."/>
            <person name="Howden P."/>
            <person name="Barker N."/>
            <person name="Lloyd C."/>
            <person name="Stevens C."/>
            <person name="Harley J."/>
            <person name="Holt K."/>
            <person name="Panagiotidis G."/>
            <person name="Lovell J."/>
            <person name="Beasley H."/>
            <person name="Henderson C."/>
            <person name="Gordon D."/>
            <person name="Auger K."/>
            <person name="Wright D."/>
            <person name="Collins J."/>
            <person name="Raisen C."/>
            <person name="Dyer L."/>
            <person name="Leung K."/>
            <person name="Robertson L."/>
            <person name="Ambridge K."/>
            <person name="Leongamornlert D."/>
            <person name="McGuire S."/>
            <person name="Gilderthorp R."/>
            <person name="Griffiths C."/>
            <person name="Manthravadi D."/>
            <person name="Nichol S."/>
            <person name="Barker G."/>
            <person name="Whitehead S."/>
            <person name="Kay M."/>
            <person name="Brown J."/>
            <person name="Murnane C."/>
            <person name="Gray E."/>
            <person name="Humphries M."/>
            <person name="Sycamore N."/>
            <person name="Barker D."/>
            <person name="Saunders D."/>
            <person name="Wallis J."/>
            <person name="Babbage A."/>
            <person name="Hammond S."/>
            <person name="Mashreghi-Mohammadi M."/>
            <person name="Barr L."/>
            <person name="Martin S."/>
            <person name="Wray P."/>
            <person name="Ellington A."/>
            <person name="Matthews N."/>
            <person name="Ellwood M."/>
            <person name="Woodmansey R."/>
            <person name="Clark G."/>
            <person name="Cooper J."/>
            <person name="Tromans A."/>
            <person name="Grafham D."/>
            <person name="Skuce C."/>
            <person name="Pandian R."/>
            <person name="Andrews R."/>
            <person name="Harrison E."/>
            <person name="Kimberley A."/>
            <person name="Garnett J."/>
            <person name="Fosker N."/>
            <person name="Hall R."/>
            <person name="Garner P."/>
            <person name="Kelly D."/>
            <person name="Bird C."/>
            <person name="Palmer S."/>
            <person name="Gehring I."/>
            <person name="Berger A."/>
            <person name="Dooley C.M."/>
            <person name="Ersan-Urun Z."/>
            <person name="Eser C."/>
            <person name="Geiger H."/>
            <person name="Geisler M."/>
            <person name="Karotki L."/>
            <person name="Kirn A."/>
            <person name="Konantz J."/>
            <person name="Konantz M."/>
            <person name="Oberlander M."/>
            <person name="Rudolph-Geiger S."/>
            <person name="Teucke M."/>
            <person name="Lanz C."/>
            <person name="Raddatz G."/>
            <person name="Osoegawa K."/>
            <person name="Zhu B."/>
            <person name="Rapp A."/>
            <person name="Widaa S."/>
            <person name="Langford C."/>
            <person name="Yang F."/>
            <person name="Schuster S.C."/>
            <person name="Carter N.P."/>
            <person name="Harrow J."/>
            <person name="Ning Z."/>
            <person name="Herrero J."/>
            <person name="Searle S.M."/>
            <person name="Enright A."/>
            <person name="Geisler R."/>
            <person name="Plasterk R.H."/>
            <person name="Lee C."/>
            <person name="Westerfield M."/>
            <person name="de Jong P.J."/>
            <person name="Zon L.I."/>
            <person name="Postlethwait J.H."/>
            <person name="Nusslein-Volhard C."/>
            <person name="Hubbard T.J."/>
            <person name="Roest Crollius H."/>
            <person name="Rogers J."/>
            <person name="Stemple D.L."/>
        </authorList>
    </citation>
    <scope>NUCLEOTIDE SEQUENCE [LARGE SCALE GENOMIC DNA]</scope>
    <source>
        <strain>Tuebingen</strain>
    </source>
</reference>
<reference key="2">
    <citation type="submission" date="2005-04" db="EMBL/GenBank/DDBJ databases">
        <authorList>
            <consortium name="NIH - Zebrafish Gene Collection (ZGC) project"/>
        </authorList>
    </citation>
    <scope>NUCLEOTIDE SEQUENCE [LARGE SCALE MRNA]</scope>
    <source>
        <tissue>Embryo</tissue>
    </source>
</reference>
<feature type="transit peptide" description="Mitochondrion" evidence="2">
    <location>
        <begin position="1"/>
        <end status="unknown"/>
    </location>
</feature>
<feature type="chain" id="PRO_0000318917" description="ATP synthase mitochondrial F1 complex assembly factor 1">
    <location>
        <begin status="unknown"/>
        <end position="302"/>
    </location>
</feature>
<organism>
    <name type="scientific">Danio rerio</name>
    <name type="common">Zebrafish</name>
    <name type="synonym">Brachydanio rerio</name>
    <dbReference type="NCBI Taxonomy" id="7955"/>
    <lineage>
        <taxon>Eukaryota</taxon>
        <taxon>Metazoa</taxon>
        <taxon>Chordata</taxon>
        <taxon>Craniata</taxon>
        <taxon>Vertebrata</taxon>
        <taxon>Euteleostomi</taxon>
        <taxon>Actinopterygii</taxon>
        <taxon>Neopterygii</taxon>
        <taxon>Teleostei</taxon>
        <taxon>Ostariophysi</taxon>
        <taxon>Cypriniformes</taxon>
        <taxon>Danionidae</taxon>
        <taxon>Danioninae</taxon>
        <taxon>Danio</taxon>
    </lineage>
</organism>
<keyword id="KW-0472">Membrane</keyword>
<keyword id="KW-0496">Mitochondrion</keyword>
<keyword id="KW-0999">Mitochondrion inner membrane</keyword>
<keyword id="KW-1185">Reference proteome</keyword>
<keyword id="KW-0809">Transit peptide</keyword>
<accession>Q1L987</accession>
<accession>Q568A9</accession>
<name>ATPF1_DANRE</name>
<proteinExistence type="evidence at transcript level"/>
<gene>
    <name type="primary">atpaf1</name>
    <name type="ORF">si:dkey-171o17.2</name>
    <name type="ORF">zgc:110583</name>
</gene>
<sequence length="302" mass="34671">MWDGEKMAAAMVQMSCLYRGMLAVRNHGIRPLIPGLVPSHFRAFSMKKEPELEENPYYSKYEEKIRKLRSSKPQEYESRLEKRTELKTEPLGRSRQAEFVKYMEKELDKRGKDGDGGFTKDKTLGSILNLEMVQEKSGAEITELWMQYFSKKDTISAVIPSSTFDVIFGRAKSCPTFLYALPQNEGYEFFVGQWAGNELHFTSLINVQTMGENAPSQLILYHYTDLQKDKDIVLMTAEMDSKFVTVHQAQCLANQVQLFYGSQRLETFRLVETFNHKPEEFKHMAVIAELEQSGIGPAVTTK</sequence>
<dbReference type="EMBL" id="CR381682">
    <property type="protein sequence ID" value="CAK05298.1"/>
    <property type="status" value="ALT_INIT"/>
    <property type="molecule type" value="Genomic_DNA"/>
</dbReference>
<dbReference type="EMBL" id="BC092940">
    <property type="protein sequence ID" value="AAH92940.1"/>
    <property type="status" value="ALT_INIT"/>
    <property type="molecule type" value="mRNA"/>
</dbReference>
<dbReference type="RefSeq" id="NP_001017907.2">
    <property type="nucleotide sequence ID" value="NM_001017907.2"/>
</dbReference>
<dbReference type="SMR" id="Q1L987"/>
<dbReference type="FunCoup" id="Q1L987">
    <property type="interactions" value="1172"/>
</dbReference>
<dbReference type="STRING" id="7955.ENSDARP00000110144"/>
<dbReference type="PaxDb" id="7955-ENSDARP00000110144"/>
<dbReference type="GeneID" id="550606"/>
<dbReference type="KEGG" id="dre:550606"/>
<dbReference type="AGR" id="ZFIN:ZDB-GENE-030219-10"/>
<dbReference type="CTD" id="64756"/>
<dbReference type="ZFIN" id="ZDB-GENE-030219-10">
    <property type="gene designation" value="atpaf1"/>
</dbReference>
<dbReference type="eggNOG" id="KOG3281">
    <property type="taxonomic scope" value="Eukaryota"/>
</dbReference>
<dbReference type="InParanoid" id="Q1L987"/>
<dbReference type="OrthoDB" id="16535at2759"/>
<dbReference type="PhylomeDB" id="Q1L987"/>
<dbReference type="PRO" id="PR:Q1L987"/>
<dbReference type="Proteomes" id="UP000000437">
    <property type="component" value="Chromosome 22"/>
</dbReference>
<dbReference type="GO" id="GO:0005743">
    <property type="term" value="C:mitochondrial inner membrane"/>
    <property type="evidence" value="ECO:0000250"/>
    <property type="project" value="UniProtKB"/>
</dbReference>
<dbReference type="GO" id="GO:0005739">
    <property type="term" value="C:mitochondrion"/>
    <property type="evidence" value="ECO:0000318"/>
    <property type="project" value="GO_Central"/>
</dbReference>
<dbReference type="GO" id="GO:0140777">
    <property type="term" value="F:protein-containing complex stabilizing activity"/>
    <property type="evidence" value="ECO:0000250"/>
    <property type="project" value="UniProtKB"/>
</dbReference>
<dbReference type="GO" id="GO:0033615">
    <property type="term" value="P:mitochondrial proton-transporting ATP synthase complex assembly"/>
    <property type="evidence" value="ECO:0000250"/>
    <property type="project" value="UniProtKB"/>
</dbReference>
<dbReference type="InterPro" id="IPR010591">
    <property type="entry name" value="ATP11"/>
</dbReference>
<dbReference type="PANTHER" id="PTHR13126:SF0">
    <property type="entry name" value="ATP SYNTHASE MITOCHONDRIAL F1 COMPLEX ASSEMBLY FACTOR 1"/>
    <property type="match status" value="1"/>
</dbReference>
<dbReference type="PANTHER" id="PTHR13126">
    <property type="entry name" value="CHAPERONE ATP11"/>
    <property type="match status" value="1"/>
</dbReference>
<dbReference type="Pfam" id="PF06644">
    <property type="entry name" value="ATP11"/>
    <property type="match status" value="1"/>
</dbReference>
<protein>
    <recommendedName>
        <fullName evidence="1">ATP synthase mitochondrial F1 complex assembly factor 1</fullName>
    </recommendedName>
</protein>
<comment type="function">
    <text evidence="1">Has a complex stabilizing activity in the assembly of the mitochondrial F1-F0 complex.</text>
</comment>
<comment type="subunit">
    <text evidence="1">Interacts with ATP5F1B; involved in the assembly of the F1 component of the mitochondrial ATP synthase (ATPase).</text>
</comment>
<comment type="subcellular location">
    <subcellularLocation>
        <location evidence="1">Mitochondrion inner membrane</location>
        <topology evidence="1">Peripheral membrane protein</topology>
    </subcellularLocation>
</comment>
<comment type="similarity">
    <text evidence="3">Belongs to the ATP11 family.</text>
</comment>
<comment type="sequence caution" evidence="3">
    <conflict type="erroneous initiation">
        <sequence resource="EMBL-CDS" id="AAH92940"/>
    </conflict>
</comment>
<comment type="sequence caution" evidence="3">
    <conflict type="erroneous initiation">
        <sequence resource="EMBL-CDS" id="CAK05298"/>
    </conflict>
</comment>
<evidence type="ECO:0000250" key="1">
    <source>
        <dbReference type="UniProtKB" id="Q811I0"/>
    </source>
</evidence>
<evidence type="ECO:0000255" key="2"/>
<evidence type="ECO:0000305" key="3"/>